<protein>
    <recommendedName>
        <fullName evidence="1">UPF0502 protein BURPS668_A1958</fullName>
    </recommendedName>
</protein>
<reference key="1">
    <citation type="journal article" date="2010" name="Genome Biol. Evol.">
        <title>Continuing evolution of Burkholderia mallei through genome reduction and large-scale rearrangements.</title>
        <authorList>
            <person name="Losada L."/>
            <person name="Ronning C.M."/>
            <person name="DeShazer D."/>
            <person name="Woods D."/>
            <person name="Fedorova N."/>
            <person name="Kim H.S."/>
            <person name="Shabalina S.A."/>
            <person name="Pearson T.R."/>
            <person name="Brinkac L."/>
            <person name="Tan P."/>
            <person name="Nandi T."/>
            <person name="Crabtree J."/>
            <person name="Badger J."/>
            <person name="Beckstrom-Sternberg S."/>
            <person name="Saqib M."/>
            <person name="Schutzer S.E."/>
            <person name="Keim P."/>
            <person name="Nierman W.C."/>
        </authorList>
    </citation>
    <scope>NUCLEOTIDE SEQUENCE [LARGE SCALE GENOMIC DNA]</scope>
    <source>
        <strain>668</strain>
    </source>
</reference>
<dbReference type="EMBL" id="CP000571">
    <property type="protein sequence ID" value="ABN86962.1"/>
    <property type="status" value="ALT_INIT"/>
    <property type="molecule type" value="Genomic_DNA"/>
</dbReference>
<dbReference type="RefSeq" id="WP_004528683.1">
    <property type="nucleotide sequence ID" value="NC_009075.1"/>
</dbReference>
<dbReference type="SMR" id="A3NKT2"/>
<dbReference type="KEGG" id="bpd:BURPS668_A1958"/>
<dbReference type="HOGENOM" id="CLU_057831_0_0_4"/>
<dbReference type="Gene3D" id="1.10.10.10">
    <property type="entry name" value="Winged helix-like DNA-binding domain superfamily/Winged helix DNA-binding domain"/>
    <property type="match status" value="2"/>
</dbReference>
<dbReference type="HAMAP" id="MF_01584">
    <property type="entry name" value="UPF0502"/>
    <property type="match status" value="1"/>
</dbReference>
<dbReference type="InterPro" id="IPR007432">
    <property type="entry name" value="DUF480"/>
</dbReference>
<dbReference type="InterPro" id="IPR036388">
    <property type="entry name" value="WH-like_DNA-bd_sf"/>
</dbReference>
<dbReference type="InterPro" id="IPR036390">
    <property type="entry name" value="WH_DNA-bd_sf"/>
</dbReference>
<dbReference type="PANTHER" id="PTHR38768">
    <property type="entry name" value="UPF0502 PROTEIN YCEH"/>
    <property type="match status" value="1"/>
</dbReference>
<dbReference type="PANTHER" id="PTHR38768:SF1">
    <property type="entry name" value="UPF0502 PROTEIN YCEH"/>
    <property type="match status" value="1"/>
</dbReference>
<dbReference type="Pfam" id="PF04337">
    <property type="entry name" value="DUF480"/>
    <property type="match status" value="1"/>
</dbReference>
<dbReference type="SUPFAM" id="SSF46785">
    <property type="entry name" value="Winged helix' DNA-binding domain"/>
    <property type="match status" value="2"/>
</dbReference>
<organism>
    <name type="scientific">Burkholderia pseudomallei (strain 668)</name>
    <dbReference type="NCBI Taxonomy" id="320373"/>
    <lineage>
        <taxon>Bacteria</taxon>
        <taxon>Pseudomonadati</taxon>
        <taxon>Pseudomonadota</taxon>
        <taxon>Betaproteobacteria</taxon>
        <taxon>Burkholderiales</taxon>
        <taxon>Burkholderiaceae</taxon>
        <taxon>Burkholderia</taxon>
        <taxon>pseudomallei group</taxon>
    </lineage>
</organism>
<accession>A3NKT2</accession>
<evidence type="ECO:0000255" key="1">
    <source>
        <dbReference type="HAMAP-Rule" id="MF_01584"/>
    </source>
</evidence>
<evidence type="ECO:0000305" key="2"/>
<feature type="chain" id="PRO_0000382553" description="UPF0502 protein BURPS668_A1958">
    <location>
        <begin position="1"/>
        <end position="234"/>
    </location>
</feature>
<name>Y6058_BURP6</name>
<comment type="similarity">
    <text evidence="1">Belongs to the UPF0502 family.</text>
</comment>
<comment type="sequence caution" evidence="2">
    <conflict type="erroneous initiation">
        <sequence resource="EMBL-CDS" id="ABN86962"/>
    </conflict>
</comment>
<gene>
    <name type="ordered locus">BURPS668_A1958</name>
</gene>
<sequence length="234" mass="25239">MNSTPDTFQRPALRELTPLEARVLGVLIEKQHTVPDTYPLSLNALTAGCNQKTARSPVMNVSEAEVLTAIDGLKRLSLASEGSSSRVPRFEHNMNRVLGIPSQAAALLTMLLLRGPQTAAELRLNSARLHGFADISSVEAFLDELAARTPPLVVKLPRAPGARESRWMHLMCGDVAPDEAPAHGAHEDAVPPSEFEALKAEQKALTAELAQLRALVEYMANELGIDVGKLTRGV</sequence>
<proteinExistence type="inferred from homology"/>